<accession>Q8ET91</accession>
<organism>
    <name type="scientific">Oceanobacillus iheyensis (strain DSM 14371 / CIP 107618 / JCM 11309 / KCTC 3954 / HTE831)</name>
    <dbReference type="NCBI Taxonomy" id="221109"/>
    <lineage>
        <taxon>Bacteria</taxon>
        <taxon>Bacillati</taxon>
        <taxon>Bacillota</taxon>
        <taxon>Bacilli</taxon>
        <taxon>Bacillales</taxon>
        <taxon>Bacillaceae</taxon>
        <taxon>Oceanobacillus</taxon>
    </lineage>
</organism>
<dbReference type="EMBL" id="BA000028">
    <property type="protein sequence ID" value="BAC12327.1"/>
    <property type="molecule type" value="Genomic_DNA"/>
</dbReference>
<dbReference type="RefSeq" id="WP_011064776.1">
    <property type="nucleotide sequence ID" value="NC_004193.1"/>
</dbReference>
<dbReference type="STRING" id="221109.gene:10732574"/>
<dbReference type="KEGG" id="oih:OB0371"/>
<dbReference type="eggNOG" id="COG1139">
    <property type="taxonomic scope" value="Bacteria"/>
</dbReference>
<dbReference type="HOGENOM" id="CLU_027059_2_0_9"/>
<dbReference type="OrthoDB" id="9782337at2"/>
<dbReference type="PhylomeDB" id="Q8ET91"/>
<dbReference type="Proteomes" id="UP000000822">
    <property type="component" value="Chromosome"/>
</dbReference>
<dbReference type="GO" id="GO:0051539">
    <property type="term" value="F:4 iron, 4 sulfur cluster binding"/>
    <property type="evidence" value="ECO:0007669"/>
    <property type="project" value="UniProtKB-KW"/>
</dbReference>
<dbReference type="GO" id="GO:0046872">
    <property type="term" value="F:metal ion binding"/>
    <property type="evidence" value="ECO:0007669"/>
    <property type="project" value="UniProtKB-KW"/>
</dbReference>
<dbReference type="GO" id="GO:0006089">
    <property type="term" value="P:lactate metabolic process"/>
    <property type="evidence" value="ECO:0007669"/>
    <property type="project" value="UniProtKB-UniRule"/>
</dbReference>
<dbReference type="Gene3D" id="1.10.1060.10">
    <property type="entry name" value="Alpha-helical ferredoxin"/>
    <property type="match status" value="1"/>
</dbReference>
<dbReference type="Gene3D" id="3.40.50.10420">
    <property type="entry name" value="NagB/RpiA/CoA transferase-like"/>
    <property type="match status" value="1"/>
</dbReference>
<dbReference type="HAMAP" id="MF_02103">
    <property type="entry name" value="LutB"/>
    <property type="match status" value="1"/>
</dbReference>
<dbReference type="InterPro" id="IPR017896">
    <property type="entry name" value="4Fe4S_Fe-S-bd"/>
</dbReference>
<dbReference type="InterPro" id="IPR017900">
    <property type="entry name" value="4Fe4S_Fe_S_CS"/>
</dbReference>
<dbReference type="InterPro" id="IPR024185">
    <property type="entry name" value="FTHF_cligase-like_sf"/>
</dbReference>
<dbReference type="InterPro" id="IPR009051">
    <property type="entry name" value="Helical_ferredxn"/>
</dbReference>
<dbReference type="InterPro" id="IPR003741">
    <property type="entry name" value="LUD_dom"/>
</dbReference>
<dbReference type="InterPro" id="IPR022825">
    <property type="entry name" value="LutB"/>
</dbReference>
<dbReference type="InterPro" id="IPR004452">
    <property type="entry name" value="LutB/LldF"/>
</dbReference>
<dbReference type="InterPro" id="IPR024569">
    <property type="entry name" value="LutB_C"/>
</dbReference>
<dbReference type="InterPro" id="IPR037171">
    <property type="entry name" value="NagB/RpiA_transferase-like"/>
</dbReference>
<dbReference type="NCBIfam" id="TIGR00273">
    <property type="entry name" value="LutB/LldF family L-lactate oxidation iron-sulfur protein"/>
    <property type="match status" value="1"/>
</dbReference>
<dbReference type="PANTHER" id="PTHR47153">
    <property type="entry name" value="LACTATE UTILIZATION PROTEIN B"/>
    <property type="match status" value="1"/>
</dbReference>
<dbReference type="PANTHER" id="PTHR47153:SF2">
    <property type="entry name" value="LACTATE UTILIZATION PROTEIN B"/>
    <property type="match status" value="1"/>
</dbReference>
<dbReference type="Pfam" id="PF13183">
    <property type="entry name" value="Fer4_8"/>
    <property type="match status" value="1"/>
</dbReference>
<dbReference type="Pfam" id="PF02589">
    <property type="entry name" value="LUD_dom"/>
    <property type="match status" value="1"/>
</dbReference>
<dbReference type="Pfam" id="PF11870">
    <property type="entry name" value="LutB_C"/>
    <property type="match status" value="1"/>
</dbReference>
<dbReference type="SUPFAM" id="SSF46548">
    <property type="entry name" value="alpha-helical ferredoxin"/>
    <property type="match status" value="1"/>
</dbReference>
<dbReference type="SUPFAM" id="SSF100950">
    <property type="entry name" value="NagB/RpiA/CoA transferase-like"/>
    <property type="match status" value="1"/>
</dbReference>
<dbReference type="PROSITE" id="PS00198">
    <property type="entry name" value="4FE4S_FER_1"/>
    <property type="match status" value="1"/>
</dbReference>
<gene>
    <name evidence="1" type="primary">lutB</name>
    <name type="ordered locus">OB0371</name>
</gene>
<evidence type="ECO:0000255" key="1">
    <source>
        <dbReference type="HAMAP-Rule" id="MF_02103"/>
    </source>
</evidence>
<keyword id="KW-0004">4Fe-4S</keyword>
<keyword id="KW-0249">Electron transport</keyword>
<keyword id="KW-0408">Iron</keyword>
<keyword id="KW-0411">Iron-sulfur</keyword>
<keyword id="KW-0479">Metal-binding</keyword>
<keyword id="KW-1185">Reference proteome</keyword>
<keyword id="KW-0677">Repeat</keyword>
<keyword id="KW-0813">Transport</keyword>
<comment type="function">
    <text evidence="1">Is involved in L-lactate degradation and allows cells to grow with lactate as the sole carbon source. Has probably a role as an electron transporter during oxidation of L-lactate.</text>
</comment>
<comment type="similarity">
    <text evidence="1">Belongs to the LutB/YkgF family.</text>
</comment>
<feature type="chain" id="PRO_0000383986" description="Lactate utilization protein B">
    <location>
        <begin position="1"/>
        <end position="478"/>
    </location>
</feature>
<feature type="domain" description="4Fe-4S ferredoxin-type 1" evidence="1">
    <location>
        <begin position="303"/>
        <end position="333"/>
    </location>
</feature>
<feature type="domain" description="4Fe-4S ferredoxin-type 2" evidence="1">
    <location>
        <begin position="352"/>
        <end position="381"/>
    </location>
</feature>
<feature type="binding site" evidence="1">
    <location>
        <position position="312"/>
    </location>
    <ligand>
        <name>[4Fe-4S] cluster</name>
        <dbReference type="ChEBI" id="CHEBI:49883"/>
        <label>1</label>
    </ligand>
</feature>
<feature type="binding site" evidence="1">
    <location>
        <position position="315"/>
    </location>
    <ligand>
        <name>[4Fe-4S] cluster</name>
        <dbReference type="ChEBI" id="CHEBI:49883"/>
        <label>1</label>
    </ligand>
</feature>
<feature type="binding site" evidence="1">
    <location>
        <position position="318"/>
    </location>
    <ligand>
        <name>[4Fe-4S] cluster</name>
        <dbReference type="ChEBI" id="CHEBI:49883"/>
        <label>1</label>
    </ligand>
</feature>
<feature type="binding site" evidence="1">
    <location>
        <position position="322"/>
    </location>
    <ligand>
        <name>[4Fe-4S] cluster</name>
        <dbReference type="ChEBI" id="CHEBI:49883"/>
        <label>2</label>
    </ligand>
</feature>
<feature type="binding site" evidence="1">
    <location>
        <position position="365"/>
    </location>
    <ligand>
        <name>[4Fe-4S] cluster</name>
        <dbReference type="ChEBI" id="CHEBI:49883"/>
        <label>2</label>
    </ligand>
</feature>
<feature type="binding site" evidence="1">
    <location>
        <position position="368"/>
    </location>
    <ligand>
        <name>[4Fe-4S] cluster</name>
        <dbReference type="ChEBI" id="CHEBI:49883"/>
        <label>2</label>
    </ligand>
</feature>
<feature type="binding site" evidence="1">
    <location>
        <position position="372"/>
    </location>
    <ligand>
        <name>[4Fe-4S] cluster</name>
        <dbReference type="ChEBI" id="CHEBI:49883"/>
        <label>1</label>
    </ligand>
</feature>
<proteinExistence type="inferred from homology"/>
<name>LUTB_OCEIH</name>
<protein>
    <recommendedName>
        <fullName evidence="1">Lactate utilization protein B</fullName>
    </recommendedName>
</protein>
<sequence>MSVKIGEISYKERIDKGIDNDFMRQAVSSAQGRFRKGRLSQAEELGNWEDWRQLGSEIRTHTLENIDYYLHQLSEQVEKRGGNVFFAQTAEEANEYIENVVKKKQAKKVVKTKSMVTEEIGLNEALEKSGAEVVESDLGEWILQLDEDPPSHIVTPALHKNRQQIRETFADKRGYDKTDSPEELAAFAREQLRQDFLTADVGITGCNFAIAESGAITLVTNEGNAEMVTSLPDTQITVMGMERLVPTWEDMEVLVSLLTRAAVGQKLTSYITAYTGARLEEEIDGPDDYHLVIVDNGRSKILGTEFQSALHCIRCAACINVCPVYRHVGGHAYNSIYPGPIGAVLTPLLDGYDDHKELPYASSLCAACTEACPVKIPLHEQLIRHREIIVEKEKKSPVSEKIMMKGFAQWASNPAAYKLSTKVARTALKPWTKDEFVENGPGPLKGWTDVRDFPAPGKQSFRAWWSERAKGEKQNGNS</sequence>
<reference key="1">
    <citation type="journal article" date="2002" name="Nucleic Acids Res.">
        <title>Genome sequence of Oceanobacillus iheyensis isolated from the Iheya Ridge and its unexpected adaptive capabilities to extreme environments.</title>
        <authorList>
            <person name="Takami H."/>
            <person name="Takaki Y."/>
            <person name="Uchiyama I."/>
        </authorList>
    </citation>
    <scope>NUCLEOTIDE SEQUENCE [LARGE SCALE GENOMIC DNA]</scope>
    <source>
        <strain>DSM 14371 / CIP 107618 / JCM 11309 / KCTC 3954 / HTE831</strain>
    </source>
</reference>